<dbReference type="PIR" id="A01545">
    <property type="entry name" value="SECH"/>
</dbReference>
<dbReference type="SMR" id="P01280"/>
<dbReference type="eggNOG" id="ENOG502R8F0">
    <property type="taxonomic scope" value="Eukaryota"/>
</dbReference>
<dbReference type="HOGENOM" id="CLU_1677275_0_0_1"/>
<dbReference type="InParanoid" id="P01280"/>
<dbReference type="OrthoDB" id="9417777at2759"/>
<dbReference type="Proteomes" id="UP000000539">
    <property type="component" value="Unassembled WGS sequence"/>
</dbReference>
<dbReference type="GO" id="GO:0005615">
    <property type="term" value="C:extracellular space"/>
    <property type="evidence" value="ECO:0000250"/>
    <property type="project" value="UniProtKB"/>
</dbReference>
<dbReference type="GO" id="GO:0046659">
    <property type="term" value="F:digestive hormone activity"/>
    <property type="evidence" value="ECO:0000250"/>
    <property type="project" value="UniProtKB"/>
</dbReference>
<dbReference type="GO" id="GO:0005179">
    <property type="term" value="F:hormone activity"/>
    <property type="evidence" value="ECO:0000250"/>
    <property type="project" value="UniProtKB"/>
</dbReference>
<dbReference type="GO" id="GO:0007189">
    <property type="term" value="P:adenylate cyclase-activating G protein-coupled receptor signaling pathway"/>
    <property type="evidence" value="ECO:0000250"/>
    <property type="project" value="UniProtKB"/>
</dbReference>
<dbReference type="GO" id="GO:0002024">
    <property type="term" value="P:diet induced thermogenesis"/>
    <property type="evidence" value="ECO:0000250"/>
    <property type="project" value="UniProtKB"/>
</dbReference>
<dbReference type="GO" id="GO:0021766">
    <property type="term" value="P:hippocampus development"/>
    <property type="evidence" value="ECO:0000250"/>
    <property type="project" value="UniProtKB"/>
</dbReference>
<dbReference type="GO" id="GO:0009992">
    <property type="term" value="P:intracellular water homeostasis"/>
    <property type="evidence" value="ECO:0000250"/>
    <property type="project" value="UniProtKB"/>
</dbReference>
<dbReference type="GO" id="GO:0050996">
    <property type="term" value="P:positive regulation of lipid catabolic process"/>
    <property type="evidence" value="ECO:0000250"/>
    <property type="project" value="UniProtKB"/>
</dbReference>
<dbReference type="GO" id="GO:0032098">
    <property type="term" value="P:regulation of appetite"/>
    <property type="evidence" value="ECO:0000250"/>
    <property type="project" value="UniProtKB"/>
</dbReference>
<dbReference type="GO" id="GO:0048167">
    <property type="term" value="P:regulation of synaptic plasticity"/>
    <property type="evidence" value="ECO:0000250"/>
    <property type="project" value="UniProtKB"/>
</dbReference>
<dbReference type="GO" id="GO:0031667">
    <property type="term" value="P:response to nutrient levels"/>
    <property type="evidence" value="ECO:0000250"/>
    <property type="project" value="UniProtKB"/>
</dbReference>
<dbReference type="Gene3D" id="6.10.250.590">
    <property type="match status" value="1"/>
</dbReference>
<dbReference type="InterPro" id="IPR000532">
    <property type="entry name" value="Glucagon_GIP_secretin_VIP"/>
</dbReference>
<dbReference type="Pfam" id="PF00123">
    <property type="entry name" value="Hormone_2"/>
    <property type="match status" value="1"/>
</dbReference>
<dbReference type="SMART" id="SM00070">
    <property type="entry name" value="GLUCA"/>
    <property type="match status" value="1"/>
</dbReference>
<dbReference type="PROSITE" id="PS00260">
    <property type="entry name" value="GLUCAGON"/>
    <property type="match status" value="1"/>
</dbReference>
<organism>
    <name type="scientific">Gallus gallus</name>
    <name type="common">Chicken</name>
    <dbReference type="NCBI Taxonomy" id="9031"/>
    <lineage>
        <taxon>Eukaryota</taxon>
        <taxon>Metazoa</taxon>
        <taxon>Chordata</taxon>
        <taxon>Craniata</taxon>
        <taxon>Vertebrata</taxon>
        <taxon>Euteleostomi</taxon>
        <taxon>Archelosauria</taxon>
        <taxon>Archosauria</taxon>
        <taxon>Dinosauria</taxon>
        <taxon>Saurischia</taxon>
        <taxon>Theropoda</taxon>
        <taxon>Coelurosauria</taxon>
        <taxon>Aves</taxon>
        <taxon>Neognathae</taxon>
        <taxon>Galloanserae</taxon>
        <taxon>Galliformes</taxon>
        <taxon>Phasianidae</taxon>
        <taxon>Phasianinae</taxon>
        <taxon>Gallus</taxon>
    </lineage>
</organism>
<accession>P01280</accession>
<sequence length="27" mass="3131">HSDGLFTSEYSKMRGNAQVQKFIQNLM</sequence>
<keyword id="KW-0027">Amidation</keyword>
<keyword id="KW-0903">Direct protein sequencing</keyword>
<keyword id="KW-0372">Hormone</keyword>
<keyword id="KW-1185">Reference proteome</keyword>
<keyword id="KW-0964">Secreted</keyword>
<feature type="peptide" id="PRO_0000043938" description="Secretin" evidence="3">
    <location>
        <begin position="1"/>
        <end position="27"/>
    </location>
</feature>
<feature type="modified residue" description="Methionine amide" evidence="3">
    <location>
        <position position="27"/>
    </location>
</feature>
<proteinExistence type="evidence at protein level"/>
<name>SECR_CHICK</name>
<reference key="1">
    <citation type="journal article" date="1980" name="Eur. J. Biochem.">
        <title>Isolation and characterization of chicken secretin.</title>
        <authorList>
            <person name="Nilsson A."/>
            <person name="Carlquist M."/>
            <person name="Joernvall H."/>
            <person name="Mutt V."/>
        </authorList>
    </citation>
    <scope>PROTEIN SEQUENCE</scope>
    <scope>SUBCELLULAR LOCATION</scope>
    <scope>AMIDATION AT MET-27</scope>
</reference>
<protein>
    <recommendedName>
        <fullName evidence="4">Secretin</fullName>
    </recommendedName>
</protein>
<evidence type="ECO:0000250" key="1">
    <source>
        <dbReference type="UniProtKB" id="P09683"/>
    </source>
</evidence>
<evidence type="ECO:0000250" key="2">
    <source>
        <dbReference type="UniProtKB" id="P11384"/>
    </source>
</evidence>
<evidence type="ECO:0000269" key="3">
    <source>
    </source>
</evidence>
<evidence type="ECO:0000303" key="4">
    <source>
    </source>
</evidence>
<evidence type="ECO:0000305" key="5"/>
<gene>
    <name evidence="1" type="primary">SCT</name>
</gene>
<comment type="function">
    <text evidence="2">Hormone involved in different processes, such as regulation of the pH of the duodenal content, food intake and water homeostasis. Exerts its biological effects by binding to secretin receptor (SCTR), a G-protein coupled receptor expressed in the basolateral domain of several cells.</text>
</comment>
<comment type="subcellular location">
    <subcellularLocation>
        <location evidence="3">Secreted</location>
    </subcellularLocation>
</comment>
<comment type="similarity">
    <text evidence="5">Belongs to the glucagon family.</text>
</comment>